<protein>
    <recommendedName>
        <fullName>Basic phospholipase A2 1</fullName>
        <shortName>svPLA2</shortName>
        <ecNumber>3.1.1.4</ecNumber>
    </recommendedName>
    <alternativeName>
        <fullName>Phosphatidylcholine 2-acylhydrolase</fullName>
    </alternativeName>
</protein>
<feature type="propeptide" id="PRO_0000022924">
    <location>
        <begin position="1" status="less than"/>
        <end position="7"/>
    </location>
</feature>
<feature type="chain" id="PRO_0000022925" description="Basic phospholipase A2 1">
    <location>
        <begin position="8"/>
        <end position="126"/>
    </location>
</feature>
<feature type="active site" evidence="1">
    <location>
        <position position="54"/>
    </location>
</feature>
<feature type="active site" evidence="1">
    <location>
        <position position="100"/>
    </location>
</feature>
<feature type="binding site" evidence="4 7">
    <location>
        <position position="34"/>
    </location>
    <ligand>
        <name>Ca(2+)</name>
        <dbReference type="ChEBI" id="CHEBI:29108"/>
    </ligand>
</feature>
<feature type="binding site" evidence="4 7">
    <location>
        <position position="36"/>
    </location>
    <ligand>
        <name>Ca(2+)</name>
        <dbReference type="ChEBI" id="CHEBI:29108"/>
    </ligand>
</feature>
<feature type="binding site" evidence="4 7">
    <location>
        <position position="38"/>
    </location>
    <ligand>
        <name>Ca(2+)</name>
        <dbReference type="ChEBI" id="CHEBI:29108"/>
    </ligand>
</feature>
<feature type="binding site" evidence="4 7">
    <location>
        <position position="55"/>
    </location>
    <ligand>
        <name>Ca(2+)</name>
        <dbReference type="ChEBI" id="CHEBI:29108"/>
    </ligand>
</feature>
<feature type="disulfide bond" evidence="4 7">
    <location>
        <begin position="18"/>
        <end position="78"/>
    </location>
</feature>
<feature type="disulfide bond" evidence="4 7">
    <location>
        <begin position="33"/>
        <end position="125"/>
    </location>
</feature>
<feature type="disulfide bond" evidence="4 7">
    <location>
        <begin position="35"/>
        <end position="51"/>
    </location>
</feature>
<feature type="disulfide bond" evidence="4 7">
    <location>
        <begin position="50"/>
        <end position="106"/>
    </location>
</feature>
<feature type="disulfide bond" evidence="4 7">
    <location>
        <begin position="57"/>
        <end position="99"/>
    </location>
</feature>
<feature type="disulfide bond" evidence="4 7">
    <location>
        <begin position="67"/>
        <end position="92"/>
    </location>
</feature>
<feature type="disulfide bond" evidence="4 7">
    <location>
        <begin position="85"/>
        <end position="97"/>
    </location>
</feature>
<feature type="non-terminal residue">
    <location>
        <position position="1"/>
    </location>
</feature>
<feature type="helix" evidence="8">
    <location>
        <begin position="9"/>
        <end position="19"/>
    </location>
</feature>
<feature type="helix" evidence="8">
    <location>
        <begin position="26"/>
        <end position="29"/>
    </location>
</feature>
<feature type="turn" evidence="8">
    <location>
        <begin position="32"/>
        <end position="34"/>
    </location>
</feature>
<feature type="strand" evidence="8">
    <location>
        <begin position="35"/>
        <end position="37"/>
    </location>
</feature>
<feature type="helix" evidence="8">
    <location>
        <begin position="46"/>
        <end position="61"/>
    </location>
</feature>
<feature type="turn" evidence="8">
    <location>
        <begin position="69"/>
        <end position="71"/>
    </location>
</feature>
<feature type="strand" evidence="8">
    <location>
        <begin position="76"/>
        <end position="79"/>
    </location>
</feature>
<feature type="strand" evidence="8">
    <location>
        <begin position="82"/>
        <end position="85"/>
    </location>
</feature>
<feature type="helix" evidence="8">
    <location>
        <begin position="91"/>
        <end position="109"/>
    </location>
</feature>
<feature type="helix" evidence="8">
    <location>
        <begin position="114"/>
        <end position="116"/>
    </location>
</feature>
<feature type="helix" evidence="8">
    <location>
        <begin position="121"/>
        <end position="124"/>
    </location>
</feature>
<organism>
    <name type="scientific">Naja sagittifera</name>
    <name type="common">Andaman cobra</name>
    <dbReference type="NCBI Taxonomy" id="195058"/>
    <lineage>
        <taxon>Eukaryota</taxon>
        <taxon>Metazoa</taxon>
        <taxon>Chordata</taxon>
        <taxon>Craniata</taxon>
        <taxon>Vertebrata</taxon>
        <taxon>Euteleostomi</taxon>
        <taxon>Lepidosauria</taxon>
        <taxon>Squamata</taxon>
        <taxon>Bifurcata</taxon>
        <taxon>Unidentata</taxon>
        <taxon>Episquamata</taxon>
        <taxon>Toxicofera</taxon>
        <taxon>Serpentes</taxon>
        <taxon>Colubroidea</taxon>
        <taxon>Elapidae</taxon>
        <taxon>Elapinae</taxon>
        <taxon>Naja</taxon>
    </lineage>
</organism>
<sequence>SNRPMPLNTYQFKNMIQCTVPKRSWWDFADYGCYCGRGGSGTPIDDLDRCCQVHDNCYNSAREQGGCRPKQKTYSYECKAGTLSCSGSNNSCAATVCDCDRLAAICFAGAPYNDNNYNIDLKARCQ</sequence>
<comment type="function">
    <text>PLA2 catalyzes the calcium-dependent hydrolysis of the 2-acyl groups in 3-sn-phosphoglycerides.</text>
</comment>
<comment type="catalytic activity">
    <reaction evidence="2 3">
        <text>a 1,2-diacyl-sn-glycero-3-phosphocholine + H2O = a 1-acyl-sn-glycero-3-phosphocholine + a fatty acid + H(+)</text>
        <dbReference type="Rhea" id="RHEA:15801"/>
        <dbReference type="ChEBI" id="CHEBI:15377"/>
        <dbReference type="ChEBI" id="CHEBI:15378"/>
        <dbReference type="ChEBI" id="CHEBI:28868"/>
        <dbReference type="ChEBI" id="CHEBI:57643"/>
        <dbReference type="ChEBI" id="CHEBI:58168"/>
        <dbReference type="EC" id="3.1.1.4"/>
    </reaction>
</comment>
<comment type="cofactor">
    <cofactor evidence="6">
        <name>Ca(2+)</name>
        <dbReference type="ChEBI" id="CHEBI:29108"/>
    </cofactor>
    <text evidence="6">Binds 1 Ca(2+) ion.</text>
</comment>
<comment type="subunit">
    <text evidence="4">Heterodimer formed between two homologous isoforms: isoform 1 and isoform 2.</text>
</comment>
<comment type="subcellular location">
    <subcellularLocation>
        <location>Secreted</location>
    </subcellularLocation>
</comment>
<comment type="tissue specificity">
    <text>Expressed by the venom gland.</text>
</comment>
<comment type="similarity">
    <text evidence="5">Belongs to the phospholipase A2 family. Group I subfamily. D49 sub-subfamily.</text>
</comment>
<evidence type="ECO:0000250" key="1">
    <source>
        <dbReference type="UniProtKB" id="P14418"/>
    </source>
</evidence>
<evidence type="ECO:0000255" key="2">
    <source>
        <dbReference type="PROSITE-ProRule" id="PRU10035"/>
    </source>
</evidence>
<evidence type="ECO:0000255" key="3">
    <source>
        <dbReference type="PROSITE-ProRule" id="PRU10036"/>
    </source>
</evidence>
<evidence type="ECO:0000269" key="4">
    <source>
    </source>
</evidence>
<evidence type="ECO:0000305" key="5"/>
<evidence type="ECO:0000305" key="6">
    <source>
    </source>
</evidence>
<evidence type="ECO:0007744" key="7">
    <source>
        <dbReference type="PDB" id="1S6B"/>
    </source>
</evidence>
<evidence type="ECO:0007829" key="8">
    <source>
        <dbReference type="PDB" id="1S6B"/>
    </source>
</evidence>
<keyword id="KW-0002">3D-structure</keyword>
<keyword id="KW-0106">Calcium</keyword>
<keyword id="KW-1015">Disulfide bond</keyword>
<keyword id="KW-0378">Hydrolase</keyword>
<keyword id="KW-0442">Lipid degradation</keyword>
<keyword id="KW-0443">Lipid metabolism</keyword>
<keyword id="KW-0479">Metal-binding</keyword>
<keyword id="KW-0964">Secreted</keyword>
<proteinExistence type="evidence at protein level"/>
<dbReference type="EC" id="3.1.1.4"/>
<dbReference type="EMBL" id="AY422775">
    <property type="protein sequence ID" value="AAR00253.2"/>
    <property type="molecule type" value="mRNA"/>
</dbReference>
<dbReference type="PDB" id="1MH2">
    <property type="method" value="X-ray"/>
    <property type="resolution" value="2.70 A"/>
    <property type="chains" value="A=8-126"/>
</dbReference>
<dbReference type="PDB" id="1MH7">
    <property type="method" value="X-ray"/>
    <property type="resolution" value="2.00 A"/>
    <property type="chains" value="A=8-126"/>
</dbReference>
<dbReference type="PDB" id="1MH8">
    <property type="method" value="X-ray"/>
    <property type="resolution" value="1.86 A"/>
    <property type="chains" value="A=8-126"/>
</dbReference>
<dbReference type="PDB" id="1S6B">
    <property type="method" value="X-ray"/>
    <property type="resolution" value="1.60 A"/>
    <property type="chains" value="A=8-126"/>
</dbReference>
<dbReference type="PDB" id="1XXW">
    <property type="method" value="X-ray"/>
    <property type="resolution" value="2.70 A"/>
    <property type="chains" value="A=8-125"/>
</dbReference>
<dbReference type="PDB" id="2RD4">
    <property type="method" value="X-ray"/>
    <property type="resolution" value="2.97 A"/>
    <property type="chains" value="A=8-126"/>
</dbReference>
<dbReference type="PDBsum" id="1MH2"/>
<dbReference type="PDBsum" id="1MH7"/>
<dbReference type="PDBsum" id="1MH8"/>
<dbReference type="PDBsum" id="1S6B"/>
<dbReference type="PDBsum" id="1XXW"/>
<dbReference type="PDBsum" id="2RD4"/>
<dbReference type="SMR" id="P60043"/>
<dbReference type="EvolutionaryTrace" id="P60043"/>
<dbReference type="GO" id="GO:0005576">
    <property type="term" value="C:extracellular region"/>
    <property type="evidence" value="ECO:0007669"/>
    <property type="project" value="UniProtKB-SubCell"/>
</dbReference>
<dbReference type="GO" id="GO:0005509">
    <property type="term" value="F:calcium ion binding"/>
    <property type="evidence" value="ECO:0007669"/>
    <property type="project" value="InterPro"/>
</dbReference>
<dbReference type="GO" id="GO:0047498">
    <property type="term" value="F:calcium-dependent phospholipase A2 activity"/>
    <property type="evidence" value="ECO:0007669"/>
    <property type="project" value="TreeGrafter"/>
</dbReference>
<dbReference type="GO" id="GO:0005543">
    <property type="term" value="F:phospholipid binding"/>
    <property type="evidence" value="ECO:0007669"/>
    <property type="project" value="TreeGrafter"/>
</dbReference>
<dbReference type="GO" id="GO:0050482">
    <property type="term" value="P:arachidonate secretion"/>
    <property type="evidence" value="ECO:0007669"/>
    <property type="project" value="InterPro"/>
</dbReference>
<dbReference type="GO" id="GO:0016042">
    <property type="term" value="P:lipid catabolic process"/>
    <property type="evidence" value="ECO:0007669"/>
    <property type="project" value="UniProtKB-KW"/>
</dbReference>
<dbReference type="GO" id="GO:0006644">
    <property type="term" value="P:phospholipid metabolic process"/>
    <property type="evidence" value="ECO:0007669"/>
    <property type="project" value="InterPro"/>
</dbReference>
<dbReference type="CDD" id="cd00125">
    <property type="entry name" value="PLA2c"/>
    <property type="match status" value="1"/>
</dbReference>
<dbReference type="FunFam" id="1.20.90.10:FF:000007">
    <property type="entry name" value="Acidic phospholipase A2"/>
    <property type="match status" value="1"/>
</dbReference>
<dbReference type="Gene3D" id="1.20.90.10">
    <property type="entry name" value="Phospholipase A2 domain"/>
    <property type="match status" value="1"/>
</dbReference>
<dbReference type="InterPro" id="IPR001211">
    <property type="entry name" value="PLipase_A2"/>
</dbReference>
<dbReference type="InterPro" id="IPR033112">
    <property type="entry name" value="PLipase_A2_Asp_AS"/>
</dbReference>
<dbReference type="InterPro" id="IPR016090">
    <property type="entry name" value="PLipase_A2_dom"/>
</dbReference>
<dbReference type="InterPro" id="IPR036444">
    <property type="entry name" value="PLipase_A2_dom_sf"/>
</dbReference>
<dbReference type="InterPro" id="IPR033113">
    <property type="entry name" value="PLipase_A2_His_AS"/>
</dbReference>
<dbReference type="PANTHER" id="PTHR11716:SF100">
    <property type="entry name" value="PHOSPHOLIPASE A2"/>
    <property type="match status" value="1"/>
</dbReference>
<dbReference type="PANTHER" id="PTHR11716">
    <property type="entry name" value="PHOSPHOLIPASE A2 FAMILY MEMBER"/>
    <property type="match status" value="1"/>
</dbReference>
<dbReference type="Pfam" id="PF00068">
    <property type="entry name" value="Phospholip_A2_1"/>
    <property type="match status" value="1"/>
</dbReference>
<dbReference type="PRINTS" id="PR00389">
    <property type="entry name" value="PHPHLIPASEA2"/>
</dbReference>
<dbReference type="SMART" id="SM00085">
    <property type="entry name" value="PA2c"/>
    <property type="match status" value="1"/>
</dbReference>
<dbReference type="SUPFAM" id="SSF48619">
    <property type="entry name" value="Phospholipase A2, PLA2"/>
    <property type="match status" value="1"/>
</dbReference>
<dbReference type="PROSITE" id="PS00119">
    <property type="entry name" value="PA2_ASP"/>
    <property type="match status" value="1"/>
</dbReference>
<dbReference type="PROSITE" id="PS00118">
    <property type="entry name" value="PA2_HIS"/>
    <property type="match status" value="1"/>
</dbReference>
<name>PA2B1_NAJSG</name>
<reference key="1">
    <citation type="submission" date="2003-11" db="EMBL/GenBank/DDBJ databases">
        <title>Phospholipase A2 isoform from Indian cobra.</title>
        <authorList>
            <person name="Paramasivam M."/>
            <person name="Saravanan K."/>
            <person name="Hariprasad R.G."/>
            <person name="Jabeen T."/>
            <person name="Sharma S."/>
            <person name="Singh T.P."/>
            <person name="Srinivasan A."/>
        </authorList>
    </citation>
    <scope>NUCLEOTIDE SEQUENCE [MRNA]</scope>
    <source>
        <tissue>Venom gland</tissue>
    </source>
</reference>
<reference key="2">
    <citation type="journal article" date="2005" name="Proteins">
        <title>Crystal structure of a calcium-induced dimer of two isoforms of cobra phospholipase A2 at 1.6 A resolution.</title>
        <authorList>
            <person name="Jabeen T."/>
            <person name="Sharma S."/>
            <person name="Singh N."/>
            <person name="Singh R.K."/>
            <person name="Kaur P."/>
            <person name="Perbandt M."/>
            <person name="Betzel C."/>
            <person name="Srinivasan A."/>
            <person name="Singh T.P."/>
        </authorList>
    </citation>
    <scope>X-RAY CRYSTALLOGRAPHY (1.60 ANGSTROMS) OF 8-126 IN COMPLEX WITH ISOFORM 2 AND CALCIUM ION</scope>
    <scope>COFACTOR</scope>
    <scope>DISULFIDE BONDS</scope>
</reference>
<accession>P60043</accession>